<name>RPC4_BPP1</name>
<sequence length="66" mass="7312">MLVRTTADFRYCGIFVSVNRVTPELWWGVMGRLRPAGFTNASLSTLSRPATCLTAGSRLLNLLVRP</sequence>
<keyword id="KW-0238">DNA-binding</keyword>
<keyword id="KW-0678">Repressor</keyword>
<keyword id="KW-0804">Transcription</keyword>
<keyword id="KW-0805">Transcription regulation</keyword>
<gene>
    <name type="primary">C4</name>
</gene>
<feature type="chain" id="PRO_0000165240" description="Repressor protein C4">
    <location>
        <begin position="1"/>
        <end position="66"/>
    </location>
</feature>
<organism>
    <name type="scientific">Escherichia phage P1</name>
    <name type="common">Bacteriophage P1</name>
    <dbReference type="NCBI Taxonomy" id="2886926"/>
    <lineage>
        <taxon>Viruses</taxon>
        <taxon>Duplodnaviria</taxon>
        <taxon>Heunggongvirae</taxon>
        <taxon>Uroviricota</taxon>
        <taxon>Caudoviricetes</taxon>
        <taxon>Punavirus</taxon>
        <taxon>Punavirus P1</taxon>
    </lineage>
</organism>
<accession>P11189</accession>
<protein>
    <recommendedName>
        <fullName>Repressor protein C4</fullName>
    </recommendedName>
</protein>
<organismHost>
    <name type="scientific">Enterobacteriaceae</name>
    <dbReference type="NCBI Taxonomy" id="543"/>
</organismHost>
<dbReference type="EMBL" id="M16568">
    <property type="protein sequence ID" value="AAA32417.1"/>
    <property type="molecule type" value="Genomic_DNA"/>
</dbReference>
<dbReference type="EMBL" id="X15639">
    <property type="protein sequence ID" value="CAA33658.1"/>
    <property type="molecule type" value="Genomic_DNA"/>
</dbReference>
<dbReference type="PIR" id="A27528">
    <property type="entry name" value="C4BPP1"/>
</dbReference>
<dbReference type="GO" id="GO:0003677">
    <property type="term" value="F:DNA binding"/>
    <property type="evidence" value="ECO:0007669"/>
    <property type="project" value="UniProtKB-KW"/>
</dbReference>
<comment type="function">
    <text>Repressor of the ant/reb gene.</text>
</comment>
<reference key="1">
    <citation type="journal article" date="1987" name="Virology">
        <title>The c4 gene of phage P1.</title>
        <authorList>
            <person name="Baumstark B.R."/>
            <person name="Scott J.R."/>
        </authorList>
    </citation>
    <scope>NUCLEOTIDE SEQUENCE [GENOMIC DNA]</scope>
</reference>
<reference key="2">
    <citation type="journal article" date="1989" name="J. Mol. Biol.">
        <title>Structure and regulation of the lytic replicon of phage P1.</title>
        <authorList>
            <person name="Hansen E.B."/>
        </authorList>
    </citation>
    <scope>NUCLEOTIDE SEQUENCE [GENOMIC DNA]</scope>
</reference>
<proteinExistence type="predicted"/>